<gene>
    <name type="primary">fixA</name>
</gene>
<dbReference type="EMBL" id="X65515">
    <property type="protein sequence ID" value="CAA46488.1"/>
    <property type="molecule type" value="Genomic_DNA"/>
</dbReference>
<dbReference type="PIR" id="S49187">
    <property type="entry name" value="S49187"/>
</dbReference>
<dbReference type="SMR" id="P53576"/>
<dbReference type="BioCyc" id="MetaCyc:MONOMER-21373"/>
<dbReference type="GO" id="GO:0009055">
    <property type="term" value="F:electron transfer activity"/>
    <property type="evidence" value="ECO:0007669"/>
    <property type="project" value="InterPro"/>
</dbReference>
<dbReference type="GO" id="GO:0009399">
    <property type="term" value="P:nitrogen fixation"/>
    <property type="evidence" value="ECO:0007669"/>
    <property type="project" value="UniProtKB-KW"/>
</dbReference>
<dbReference type="CDD" id="cd01714">
    <property type="entry name" value="ETF_beta"/>
    <property type="match status" value="1"/>
</dbReference>
<dbReference type="Gene3D" id="3.40.50.620">
    <property type="entry name" value="HUPs"/>
    <property type="match status" value="1"/>
</dbReference>
<dbReference type="InterPro" id="IPR000049">
    <property type="entry name" value="ET-Flavoprotein_bsu_CS"/>
</dbReference>
<dbReference type="InterPro" id="IPR014730">
    <property type="entry name" value="ETF_a/b_N"/>
</dbReference>
<dbReference type="InterPro" id="IPR012255">
    <property type="entry name" value="ETF_b"/>
</dbReference>
<dbReference type="InterPro" id="IPR033948">
    <property type="entry name" value="ETF_beta_N"/>
</dbReference>
<dbReference type="InterPro" id="IPR014729">
    <property type="entry name" value="Rossmann-like_a/b/a_fold"/>
</dbReference>
<dbReference type="PANTHER" id="PTHR21294">
    <property type="entry name" value="ELECTRON TRANSFER FLAVOPROTEIN BETA-SUBUNIT"/>
    <property type="match status" value="1"/>
</dbReference>
<dbReference type="PANTHER" id="PTHR21294:SF17">
    <property type="entry name" value="PROTEIN FIXA"/>
    <property type="match status" value="1"/>
</dbReference>
<dbReference type="Pfam" id="PF01012">
    <property type="entry name" value="ETF"/>
    <property type="match status" value="1"/>
</dbReference>
<dbReference type="PIRSF" id="PIRSF000090">
    <property type="entry name" value="Beta-ETF"/>
    <property type="match status" value="1"/>
</dbReference>
<dbReference type="SMART" id="SM00893">
    <property type="entry name" value="ETF"/>
    <property type="match status" value="1"/>
</dbReference>
<dbReference type="SUPFAM" id="SSF52402">
    <property type="entry name" value="Adenine nucleotide alpha hydrolases-like"/>
    <property type="match status" value="1"/>
</dbReference>
<dbReference type="PROSITE" id="PS01065">
    <property type="entry name" value="ETF_BETA"/>
    <property type="match status" value="1"/>
</dbReference>
<proteinExistence type="inferred from homology"/>
<accession>P53576</accession>
<keyword id="KW-0249">Electron transport</keyword>
<keyword id="KW-0535">Nitrogen fixation</keyword>
<keyword id="KW-0813">Transport</keyword>
<organism>
    <name type="scientific">Azotobacter vinelandii</name>
    <dbReference type="NCBI Taxonomy" id="354"/>
    <lineage>
        <taxon>Bacteria</taxon>
        <taxon>Pseudomonadati</taxon>
        <taxon>Pseudomonadota</taxon>
        <taxon>Gammaproteobacteria</taxon>
        <taxon>Pseudomonadales</taxon>
        <taxon>Pseudomonadaceae</taxon>
        <taxon>Azotobacter</taxon>
    </lineage>
</organism>
<feature type="chain" id="PRO_0000167886" description="Protein FixA">
    <location>
        <begin position="1"/>
        <end position="281"/>
    </location>
</feature>
<evidence type="ECO:0000305" key="1"/>
<protein>
    <recommendedName>
        <fullName>Protein FixA</fullName>
    </recommendedName>
</protein>
<name>FIXA_AZOVI</name>
<sequence length="281" mass="30741">MHSVVCIKQLPDSAQIRVHPVTNTIMRQGVPAIINPYDLFALEEALRLKDKFGGTVTVVTMGPPMAEAALRKCLSFGADDAILVSDRAFAGSDTLATSYALSAVIRKIMEDMPVDLIFTGKQTIDGDTAQVGPGIAKRLDYQLLTYVSRIVDVDTAKKEIQVERRAEGGVQLLETSLPCLITMLEGTNEMRFGDLDDLFRAARHELKVWDRVAAGIDTVEMIGLKGSPTVVSKVFAPKPRSKRAELIESHDSDPKNLAEAALAKLFTQHPNLEQEIAKRAV</sequence>
<comment type="function">
    <text>May play a role in a redox process involved in nitrogen fixation.</text>
</comment>
<comment type="subunit">
    <text evidence="1">FixA and FixB form a heterodimer.</text>
</comment>
<comment type="similarity">
    <text evidence="1">Belongs to the ETF beta-subunit/FixA family.</text>
</comment>
<reference key="1">
    <citation type="submission" date="1994-07" db="EMBL/GenBank/DDBJ databases">
        <authorList>
            <person name="Wientjens R."/>
            <person name="van Dongen W."/>
            <person name="Haaker H."/>
        </authorList>
    </citation>
    <scope>NUCLEOTIDE SEQUENCE [GENOMIC DNA]</scope>
    <source>
        <strain>ATCC 478 / DSM 2289 / BCRC 14361 / JCM 21475 / KCTC 12137 / NBRC 102612 / NCIMB 12096 / NRRL B-14641 / VKM B-1617 / NRS 16</strain>
    </source>
</reference>